<organism>
    <name type="scientific">Triticum aestivum</name>
    <name type="common">Wheat</name>
    <dbReference type="NCBI Taxonomy" id="4565"/>
    <lineage>
        <taxon>Eukaryota</taxon>
        <taxon>Viridiplantae</taxon>
        <taxon>Streptophyta</taxon>
        <taxon>Embryophyta</taxon>
        <taxon>Tracheophyta</taxon>
        <taxon>Spermatophyta</taxon>
        <taxon>Magnoliopsida</taxon>
        <taxon>Liliopsida</taxon>
        <taxon>Poales</taxon>
        <taxon>Poaceae</taxon>
        <taxon>BOP clade</taxon>
        <taxon>Pooideae</taxon>
        <taxon>Triticodae</taxon>
        <taxon>Triticeae</taxon>
        <taxon>Triticinae</taxon>
        <taxon>Triticum</taxon>
    </lineage>
</organism>
<comment type="function">
    <text>Important for breakdown of endosperm starch during germination.</text>
</comment>
<comment type="catalytic activity">
    <reaction evidence="2">
        <text>Endohydrolysis of (1-&gt;4)-alpha-D-glucosidic linkages in polysaccharides containing three or more (1-&gt;4)-alpha-linked D-glucose units.</text>
        <dbReference type="EC" id="3.2.1.1"/>
    </reaction>
</comment>
<comment type="cofactor">
    <cofactor evidence="2">
        <name>Ca(2+)</name>
        <dbReference type="ChEBI" id="CHEBI:29108"/>
    </cofactor>
    <text evidence="2">Binds 3 Ca(2+) ions per subunit.</text>
</comment>
<comment type="subunit">
    <text evidence="1">Monomer.</text>
</comment>
<comment type="developmental stage">
    <text>Expressed at a high level during germination in the aleurones cells under the control of the plant hormone gibberellic acid and in the developing grains at a low level.</text>
</comment>
<comment type="miscellaneous">
    <text evidence="1">Binds starch not only at the active site, but also via accessory binding sites on the protein surface that are important for efficient binding to starch granules and thereby increase enzyme activity.</text>
</comment>
<comment type="similarity">
    <text evidence="5">Belongs to the glycosyl hydrolase 13 family.</text>
</comment>
<feature type="signal peptide" evidence="4">
    <location>
        <begin position="1"/>
        <end position="24"/>
    </location>
</feature>
<feature type="chain" id="PRO_0000001418" description="Alpha-amylase AMY3">
    <location>
        <begin position="25"/>
        <end position="413"/>
    </location>
</feature>
<feature type="active site" description="Nucleophile" evidence="3">
    <location>
        <position position="203"/>
    </location>
</feature>
<feature type="active site" description="Proton donor" evidence="3">
    <location>
        <position position="228"/>
    </location>
</feature>
<feature type="binding site" evidence="3">
    <location>
        <begin position="76"/>
        <end position="77"/>
    </location>
    <ligand>
        <name>substrate</name>
    </ligand>
</feature>
<feature type="binding site" evidence="3">
    <location>
        <position position="115"/>
    </location>
    <ligand>
        <name>Ca(2+)</name>
        <dbReference type="ChEBI" id="CHEBI:29108"/>
        <label>1</label>
    </ligand>
</feature>
<feature type="binding site" evidence="3">
    <location>
        <position position="132"/>
    </location>
    <ligand>
        <name>Ca(2+)</name>
        <dbReference type="ChEBI" id="CHEBI:29108"/>
        <label>2</label>
    </ligand>
</feature>
<feature type="binding site" evidence="3">
    <location>
        <position position="135"/>
    </location>
    <ligand>
        <name>Ca(2+)</name>
        <dbReference type="ChEBI" id="CHEBI:29108"/>
        <label>2</label>
    </ligand>
</feature>
<feature type="binding site" evidence="3">
    <location>
        <position position="137"/>
    </location>
    <ligand>
        <name>Ca(2+)</name>
        <dbReference type="ChEBI" id="CHEBI:29108"/>
        <label>2</label>
    </ligand>
</feature>
<feature type="binding site" evidence="3">
    <location>
        <position position="141"/>
    </location>
    <ligand>
        <name>Ca(2+)</name>
        <dbReference type="ChEBI" id="CHEBI:29108"/>
        <label>2</label>
    </ligand>
</feature>
<feature type="binding site" evidence="3">
    <location>
        <position position="151"/>
    </location>
    <ligand>
        <name>Ca(2+)</name>
        <dbReference type="ChEBI" id="CHEBI:29108"/>
        <label>3</label>
    </ligand>
</feature>
<feature type="binding site" evidence="3">
    <location>
        <position position="162"/>
    </location>
    <ligand>
        <name>Ca(2+)</name>
        <dbReference type="ChEBI" id="CHEBI:29108"/>
        <label>1</label>
    </ligand>
</feature>
<feature type="binding site" evidence="3">
    <location>
        <position position="167"/>
    </location>
    <ligand>
        <name>Ca(2+)</name>
        <dbReference type="ChEBI" id="CHEBI:29108"/>
        <label>3</label>
    </ligand>
</feature>
<feature type="binding site" evidence="3">
    <location>
        <position position="170"/>
    </location>
    <ligand>
        <name>Ca(2+)</name>
        <dbReference type="ChEBI" id="CHEBI:29108"/>
        <label>3</label>
    </ligand>
</feature>
<feature type="binding site" evidence="3">
    <location>
        <position position="172"/>
    </location>
    <ligand>
        <name>Ca(2+)</name>
        <dbReference type="ChEBI" id="CHEBI:29108"/>
        <label>1</label>
    </ligand>
</feature>
<feature type="binding site" evidence="3">
    <location>
        <position position="172"/>
    </location>
    <ligand>
        <name>Ca(2+)</name>
        <dbReference type="ChEBI" id="CHEBI:29108"/>
        <label>3</label>
    </ligand>
</feature>
<feature type="binding site" evidence="3">
    <location>
        <begin position="201"/>
        <end position="206"/>
    </location>
    <ligand>
        <name>substrate</name>
    </ligand>
</feature>
<feature type="binding site" evidence="3">
    <location>
        <position position="207"/>
    </location>
    <ligand>
        <name>Ca(2+)</name>
        <dbReference type="ChEBI" id="CHEBI:29108"/>
        <label>1</label>
    </ligand>
</feature>
<feature type="binding site" evidence="2">
    <location>
        <position position="235"/>
    </location>
    <ligand>
        <name>substrate</name>
    </ligand>
</feature>
<feature type="binding site" evidence="2">
    <location>
        <position position="276"/>
    </location>
    <ligand>
        <name>substrate</name>
    </ligand>
</feature>
<feature type="binding site" evidence="3">
    <location>
        <begin position="282"/>
        <end position="284"/>
    </location>
    <ligand>
        <name>substrate</name>
    </ligand>
</feature>
<feature type="binding site" evidence="2">
    <location>
        <position position="295"/>
    </location>
    <ligand>
        <name>substrate</name>
    </ligand>
</feature>
<feature type="binding site" evidence="2">
    <location>
        <position position="301"/>
    </location>
    <ligand>
        <name>substrate</name>
    </ligand>
</feature>
<feature type="binding site" evidence="2">
    <location>
        <position position="380"/>
    </location>
    <ligand>
        <name>substrate</name>
    </ligand>
</feature>
<feature type="binding site" evidence="1">
    <location>
        <begin position="385"/>
        <end position="387"/>
    </location>
    <ligand>
        <name>substrate</name>
    </ligand>
</feature>
<feature type="binding site" evidence="2">
    <location>
        <position position="408"/>
    </location>
    <ligand>
        <name>substrate</name>
    </ligand>
</feature>
<feature type="site" description="Transition state stabilizer" evidence="2">
    <location>
        <position position="296"/>
    </location>
</feature>
<sequence>MGKHSATLCGLLVVVLCLASSLAQAQILFQGFNWESWKTQGGWYKFMQGKVEEIASTGATHVWLPPPSQSVSPEGYLPGQLYNLNSKYGSGADLKSLIQAFRGKNISCVADIVINHRCADKKDGRGVYCIFEGGTSDNRLDWGPDEICSDDTKYSNGRGHRDTGGGFDAAPDIDHLNPRVQRELSAWLNWLKTDLGFDGWRLDFAKGYSAAMAKIYVDNSKPAFVVGELYDRDRQLLANWVRGVGGPATAFDFPTKGVLQEAVQGDLGRMRGSDGKAPGMIGWMPEKTVTFIDNHDTGSTQRLWPFPSDKVMQGYAYILTHPGIPCIFYDHVFDWKLKQEITALATVRSRNGIHPGSTLDILKAEGDLYVAKIGGKVITKIGSRYNIGDNVIPSGFKIAAKGNNYCVWEKSGL</sequence>
<accession>P08117</accession>
<gene>
    <name type="primary">AMY1.1</name>
    <name type="synonym">ALPHA-AMY3</name>
</gene>
<dbReference type="EC" id="3.2.1.1" evidence="2"/>
<dbReference type="EMBL" id="X05809">
    <property type="protein sequence ID" value="CAA29252.1"/>
    <property type="molecule type" value="Genomic_DNA"/>
</dbReference>
<dbReference type="EMBL" id="M16991">
    <property type="protein sequence ID" value="AAA34259.1"/>
    <property type="molecule type" value="Genomic_DNA"/>
</dbReference>
<dbReference type="PIR" id="S06357">
    <property type="entry name" value="ALWT3"/>
</dbReference>
<dbReference type="SMR" id="P08117"/>
<dbReference type="STRING" id="4565.P08117"/>
<dbReference type="CAZy" id="GH13">
    <property type="family name" value="Glycoside Hydrolase Family 13"/>
</dbReference>
<dbReference type="PaxDb" id="4565-Traes_5DL_91B56C21D.1"/>
<dbReference type="EnsemblPlants" id="TraesARI5A03G02798050.1">
    <property type="protein sequence ID" value="TraesARI5A03G02798050.1"/>
    <property type="gene ID" value="TraesARI5A03G02798050"/>
</dbReference>
<dbReference type="EnsemblPlants" id="TraesCAD_scaffold_111533_01G000300.1">
    <property type="protein sequence ID" value="TraesCAD_scaffold_111533_01G000300.1"/>
    <property type="gene ID" value="TraesCAD_scaffold_111533_01G000300"/>
</dbReference>
<dbReference type="EnsemblPlants" id="TraesCLE_scaffold_120401_01G000400.1">
    <property type="protein sequence ID" value="TraesCLE_scaffold_120401_01G000400.1"/>
    <property type="gene ID" value="TraesCLE_scaffold_120401_01G000400"/>
</dbReference>
<dbReference type="EnsemblPlants" id="TraesCS5A02G464500.1">
    <property type="protein sequence ID" value="TraesCS5A02G464500.1"/>
    <property type="gene ID" value="TraesCS5A02G464500"/>
</dbReference>
<dbReference type="EnsemblPlants" id="TraesCS5A03G1096000.1">
    <property type="protein sequence ID" value="TraesCS5A03G1096000.1.CDS"/>
    <property type="gene ID" value="TraesCS5A03G1096000"/>
</dbReference>
<dbReference type="EnsemblPlants" id="TraesJAG5A03G02757130.1">
    <property type="protein sequence ID" value="TraesJAG5A03G02757130.1"/>
    <property type="gene ID" value="TraesJAG5A03G02757130"/>
</dbReference>
<dbReference type="EnsemblPlants" id="TraesJUL5A03G02774740.1">
    <property type="protein sequence ID" value="TraesJUL5A03G02774740.1"/>
    <property type="gene ID" value="TraesJUL5A03G02774740"/>
</dbReference>
<dbReference type="EnsemblPlants" id="TraesKAR5A01G0393410.1">
    <property type="protein sequence ID" value="cds.TraesKAR5A01G0393410.1"/>
    <property type="gene ID" value="TraesKAR5A01G0393410"/>
</dbReference>
<dbReference type="EnsemblPlants" id="TraesLAC5A03G02709850.1">
    <property type="protein sequence ID" value="TraesLAC5A03G02709850.1"/>
    <property type="gene ID" value="TraesLAC5A03G02709850"/>
</dbReference>
<dbReference type="EnsemblPlants" id="TraesLDM5A03G02758660.1">
    <property type="protein sequence ID" value="TraesLDM5A03G02758660.1"/>
    <property type="gene ID" value="TraesLDM5A03G02758660"/>
</dbReference>
<dbReference type="EnsemblPlants" id="TraesMAC5A03G02754230.1">
    <property type="protein sequence ID" value="TraesMAC5A03G02754230.1"/>
    <property type="gene ID" value="TraesMAC5A03G02754230"/>
</dbReference>
<dbReference type="EnsemblPlants" id="TraesNOR5A03G02779670.1">
    <property type="protein sequence ID" value="TraesNOR5A03G02779670.1"/>
    <property type="gene ID" value="TraesNOR5A03G02779670"/>
</dbReference>
<dbReference type="EnsemblPlants" id="TraesPARA_EIv1.0_1522680.1">
    <property type="protein sequence ID" value="TraesPARA_EIv1.0_1522680.1.CDS"/>
    <property type="gene ID" value="TraesPARA_EIv1.0_1522680"/>
</dbReference>
<dbReference type="EnsemblPlants" id="TraesROB_scaffold_058472_01G000200.1">
    <property type="protein sequence ID" value="TraesROB_scaffold_058472_01G000200.1"/>
    <property type="gene ID" value="TraesROB_scaffold_058472_01G000200"/>
</dbReference>
<dbReference type="EnsemblPlants" id="TraesSTA5A03G02746510.1">
    <property type="protein sequence ID" value="TraesSTA5A03G02746510.1"/>
    <property type="gene ID" value="TraesSTA5A03G02746510"/>
</dbReference>
<dbReference type="EnsemblPlants" id="TraesSYM5A03G02785340.1">
    <property type="protein sequence ID" value="TraesSYM5A03G02785340.1"/>
    <property type="gene ID" value="TraesSYM5A03G02785340"/>
</dbReference>
<dbReference type="EnsemblPlants" id="TraesWEE_scaffold_073930_01G000400.1">
    <property type="protein sequence ID" value="TraesWEE_scaffold_073930_01G000400.1"/>
    <property type="gene ID" value="TraesWEE_scaffold_073930_01G000400"/>
</dbReference>
<dbReference type="Gramene" id="TraesARI5A03G02798050.1">
    <property type="protein sequence ID" value="TraesARI5A03G02798050.1"/>
    <property type="gene ID" value="TraesARI5A03G02798050"/>
</dbReference>
<dbReference type="Gramene" id="TraesCAD_scaffold_111533_01G000300.1">
    <property type="protein sequence ID" value="TraesCAD_scaffold_111533_01G000300.1"/>
    <property type="gene ID" value="TraesCAD_scaffold_111533_01G000300"/>
</dbReference>
<dbReference type="Gramene" id="TraesCLE_scaffold_120401_01G000400.1">
    <property type="protein sequence ID" value="TraesCLE_scaffold_120401_01G000400.1"/>
    <property type="gene ID" value="TraesCLE_scaffold_120401_01G000400"/>
</dbReference>
<dbReference type="Gramene" id="TraesCS5A02G464500.1">
    <property type="protein sequence ID" value="TraesCS5A02G464500.1"/>
    <property type="gene ID" value="TraesCS5A02G464500"/>
</dbReference>
<dbReference type="Gramene" id="TraesCS5A03G1096000.1">
    <property type="protein sequence ID" value="TraesCS5A03G1096000.1.CDS"/>
    <property type="gene ID" value="TraesCS5A03G1096000"/>
</dbReference>
<dbReference type="Gramene" id="TraesJAG5A03G02757130.1">
    <property type="protein sequence ID" value="TraesJAG5A03G02757130.1"/>
    <property type="gene ID" value="TraesJAG5A03G02757130"/>
</dbReference>
<dbReference type="Gramene" id="TraesJUL5A03G02774740.1">
    <property type="protein sequence ID" value="TraesJUL5A03G02774740.1"/>
    <property type="gene ID" value="TraesJUL5A03G02774740"/>
</dbReference>
<dbReference type="Gramene" id="TraesKAR5A01G0393410.1">
    <property type="protein sequence ID" value="cds.TraesKAR5A01G0393410.1"/>
    <property type="gene ID" value="TraesKAR5A01G0393410"/>
</dbReference>
<dbReference type="Gramene" id="TraesLAC5A03G02709850.1">
    <property type="protein sequence ID" value="TraesLAC5A03G02709850.1"/>
    <property type="gene ID" value="TraesLAC5A03G02709850"/>
</dbReference>
<dbReference type="Gramene" id="TraesLDM5A03G02758660.1">
    <property type="protein sequence ID" value="TraesLDM5A03G02758660.1"/>
    <property type="gene ID" value="TraesLDM5A03G02758660"/>
</dbReference>
<dbReference type="Gramene" id="TraesMAC5A03G02754230.1">
    <property type="protein sequence ID" value="TraesMAC5A03G02754230.1"/>
    <property type="gene ID" value="TraesMAC5A03G02754230"/>
</dbReference>
<dbReference type="Gramene" id="TraesNOR5A03G02779670.1">
    <property type="protein sequence ID" value="TraesNOR5A03G02779670.1"/>
    <property type="gene ID" value="TraesNOR5A03G02779670"/>
</dbReference>
<dbReference type="Gramene" id="TraesPARA_EIv1.0_1522680.1">
    <property type="protein sequence ID" value="TraesPARA_EIv1.0_1522680.1.CDS"/>
    <property type="gene ID" value="TraesPARA_EIv1.0_1522680"/>
</dbReference>
<dbReference type="Gramene" id="TraesROB_scaffold_058472_01G000200.1">
    <property type="protein sequence ID" value="TraesROB_scaffold_058472_01G000200.1"/>
    <property type="gene ID" value="TraesROB_scaffold_058472_01G000200"/>
</dbReference>
<dbReference type="Gramene" id="TraesSTA5A03G02746510.1">
    <property type="protein sequence ID" value="TraesSTA5A03G02746510.1"/>
    <property type="gene ID" value="TraesSTA5A03G02746510"/>
</dbReference>
<dbReference type="Gramene" id="TraesSYM5A03G02785340.1">
    <property type="protein sequence ID" value="TraesSYM5A03G02785340.1"/>
    <property type="gene ID" value="TraesSYM5A03G02785340"/>
</dbReference>
<dbReference type="Gramene" id="TraesWEE_scaffold_073930_01G000400.1">
    <property type="protein sequence ID" value="TraesWEE_scaffold_073930_01G000400.1"/>
    <property type="gene ID" value="TraesWEE_scaffold_073930_01G000400"/>
</dbReference>
<dbReference type="eggNOG" id="KOG0471">
    <property type="taxonomic scope" value="Eukaryota"/>
</dbReference>
<dbReference type="OMA" id="GNHTHEN"/>
<dbReference type="OrthoDB" id="550577at2759"/>
<dbReference type="BRENDA" id="3.2.1.1">
    <property type="organism ID" value="6500"/>
</dbReference>
<dbReference type="Proteomes" id="UP000019116">
    <property type="component" value="Chromosome 5A"/>
</dbReference>
<dbReference type="GO" id="GO:0004556">
    <property type="term" value="F:alpha-amylase activity"/>
    <property type="evidence" value="ECO:0000318"/>
    <property type="project" value="GO_Central"/>
</dbReference>
<dbReference type="GO" id="GO:0005509">
    <property type="term" value="F:calcium ion binding"/>
    <property type="evidence" value="ECO:0007669"/>
    <property type="project" value="InterPro"/>
</dbReference>
<dbReference type="GO" id="GO:0005983">
    <property type="term" value="P:starch catabolic process"/>
    <property type="evidence" value="ECO:0007669"/>
    <property type="project" value="UniProtKB-ARBA"/>
</dbReference>
<dbReference type="GO" id="GO:0005987">
    <property type="term" value="P:sucrose catabolic process"/>
    <property type="evidence" value="ECO:0000318"/>
    <property type="project" value="GO_Central"/>
</dbReference>
<dbReference type="CDD" id="cd11314">
    <property type="entry name" value="AmyAc_arch_bac_plant_AmyA"/>
    <property type="match status" value="1"/>
</dbReference>
<dbReference type="Gene3D" id="3.20.20.80">
    <property type="entry name" value="Glycosidases"/>
    <property type="match status" value="1"/>
</dbReference>
<dbReference type="Gene3D" id="2.60.40.1180">
    <property type="entry name" value="Golgi alpha-mannosidase II"/>
    <property type="match status" value="1"/>
</dbReference>
<dbReference type="InterPro" id="IPR012850">
    <property type="entry name" value="A-amylase_bs_C"/>
</dbReference>
<dbReference type="InterPro" id="IPR013775">
    <property type="entry name" value="A-amylase_pln"/>
</dbReference>
<dbReference type="InterPro" id="IPR006046">
    <property type="entry name" value="Alpha_amylase"/>
</dbReference>
<dbReference type="InterPro" id="IPR006047">
    <property type="entry name" value="Glyco_hydro_13_cat_dom"/>
</dbReference>
<dbReference type="InterPro" id="IPR013780">
    <property type="entry name" value="Glyco_hydro_b"/>
</dbReference>
<dbReference type="InterPro" id="IPR017853">
    <property type="entry name" value="Glycoside_hydrolase_SF"/>
</dbReference>
<dbReference type="PANTHER" id="PTHR43447">
    <property type="entry name" value="ALPHA-AMYLASE"/>
    <property type="match status" value="1"/>
</dbReference>
<dbReference type="Pfam" id="PF07821">
    <property type="entry name" value="Alpha-amyl_C2"/>
    <property type="match status" value="1"/>
</dbReference>
<dbReference type="Pfam" id="PF00128">
    <property type="entry name" value="Alpha-amylase"/>
    <property type="match status" value="1"/>
</dbReference>
<dbReference type="PIRSF" id="PIRSF001028">
    <property type="entry name" value="Alph-amls_plant"/>
    <property type="match status" value="1"/>
</dbReference>
<dbReference type="PRINTS" id="PR00110">
    <property type="entry name" value="ALPHAAMYLASE"/>
</dbReference>
<dbReference type="SMART" id="SM00642">
    <property type="entry name" value="Aamy"/>
    <property type="match status" value="1"/>
</dbReference>
<dbReference type="SMART" id="SM00810">
    <property type="entry name" value="Alpha-amyl_C2"/>
    <property type="match status" value="1"/>
</dbReference>
<dbReference type="SUPFAM" id="SSF51445">
    <property type="entry name" value="(Trans)glycosidases"/>
    <property type="match status" value="1"/>
</dbReference>
<dbReference type="SUPFAM" id="SSF51011">
    <property type="entry name" value="Glycosyl hydrolase domain"/>
    <property type="match status" value="1"/>
</dbReference>
<name>AMY3_WHEAT</name>
<protein>
    <recommendedName>
        <fullName>Alpha-amylase AMY3</fullName>
        <ecNumber evidence="2">3.2.1.1</ecNumber>
    </recommendedName>
    <alternativeName>
        <fullName>1,4-alpha-D-glucan glucanohydrolase</fullName>
    </alternativeName>
</protein>
<keyword id="KW-0106">Calcium</keyword>
<keyword id="KW-0119">Carbohydrate metabolism</keyword>
<keyword id="KW-0309">Germination</keyword>
<keyword id="KW-0326">Glycosidase</keyword>
<keyword id="KW-0378">Hydrolase</keyword>
<keyword id="KW-0479">Metal-binding</keyword>
<keyword id="KW-1185">Reference proteome</keyword>
<keyword id="KW-0732">Signal</keyword>
<reference key="1">
    <citation type="journal article" date="1987" name="Mol. Gen. Genet.">
        <title>A novel wheat alpha-amylase gene (alpha-Amy3).</title>
        <authorList>
            <person name="Baulcombe D.C."/>
            <person name="Huttly A.K."/>
            <person name="Martienssen R.A."/>
            <person name="Barker R.F."/>
            <person name="Jarvis M.G."/>
        </authorList>
    </citation>
    <scope>NUCLEOTIDE SEQUENCE [GENOMIC DNA]</scope>
    <source>
        <strain>cv. Chinese Spring</strain>
    </source>
</reference>
<proteinExistence type="evidence at transcript level"/>
<evidence type="ECO:0000250" key="1"/>
<evidence type="ECO:0000250" key="2">
    <source>
        <dbReference type="UniProtKB" id="P00693"/>
    </source>
</evidence>
<evidence type="ECO:0000250" key="3">
    <source>
        <dbReference type="UniProtKB" id="P04063"/>
    </source>
</evidence>
<evidence type="ECO:0000255" key="4"/>
<evidence type="ECO:0000305" key="5"/>